<proteinExistence type="evidence at transcript level"/>
<protein>
    <recommendedName>
        <fullName>Inositol monophosphatase 1</fullName>
        <shortName>IMP 1</shortName>
        <shortName>IMPase 1</shortName>
        <ecNumber evidence="1">3.1.3.25</ecNumber>
    </recommendedName>
    <alternativeName>
        <fullName evidence="1">D-galactose 1-phosphate phosphatase</fullName>
        <ecNumber evidence="1">3.1.3.94</ecNumber>
    </alternativeName>
    <alternativeName>
        <fullName>Inositol-1(or 4)-monophosphatase 1</fullName>
    </alternativeName>
    <alternativeName>
        <fullName>Lithium-sensitive myo-inositol monophosphatase A1</fullName>
    </alternativeName>
</protein>
<reference key="1">
    <citation type="submission" date="1998-04" db="EMBL/GenBank/DDBJ databases">
        <title>Porcine myo-inositol monophosphatase: expression and characterization of the recombinant enzyme.</title>
        <authorList>
            <person name="Gao Z.G."/>
            <person name="Lo S.C.L."/>
            <person name="Kwok F."/>
        </authorList>
    </citation>
    <scope>NUCLEOTIDE SEQUENCE [MRNA]</scope>
</reference>
<dbReference type="EC" id="3.1.3.25" evidence="1"/>
<dbReference type="EC" id="3.1.3.94" evidence="1"/>
<dbReference type="EMBL" id="AF056489">
    <property type="protein sequence ID" value="AAC28084.1"/>
    <property type="molecule type" value="mRNA"/>
</dbReference>
<dbReference type="RefSeq" id="NP_999381.1">
    <property type="nucleotide sequence ID" value="NM_214216.1"/>
</dbReference>
<dbReference type="SMR" id="O77591"/>
<dbReference type="FunCoup" id="O77591">
    <property type="interactions" value="769"/>
</dbReference>
<dbReference type="STRING" id="9823.ENSSSCP00000027371"/>
<dbReference type="PeptideAtlas" id="O77591"/>
<dbReference type="GeneID" id="397425"/>
<dbReference type="KEGG" id="ssc:397425"/>
<dbReference type="CTD" id="3612"/>
<dbReference type="InParanoid" id="O77591"/>
<dbReference type="OrthoDB" id="10254945at2759"/>
<dbReference type="UniPathway" id="UPA00823">
    <property type="reaction ID" value="UER00788"/>
</dbReference>
<dbReference type="Proteomes" id="UP000008227">
    <property type="component" value="Unplaced"/>
</dbReference>
<dbReference type="Proteomes" id="UP000314985">
    <property type="component" value="Unplaced"/>
</dbReference>
<dbReference type="Proteomes" id="UP000694570">
    <property type="component" value="Unplaced"/>
</dbReference>
<dbReference type="Proteomes" id="UP000694571">
    <property type="component" value="Unplaced"/>
</dbReference>
<dbReference type="Proteomes" id="UP000694720">
    <property type="component" value="Unplaced"/>
</dbReference>
<dbReference type="Proteomes" id="UP000694722">
    <property type="component" value="Unplaced"/>
</dbReference>
<dbReference type="Proteomes" id="UP000694723">
    <property type="component" value="Unplaced"/>
</dbReference>
<dbReference type="Proteomes" id="UP000694724">
    <property type="component" value="Unplaced"/>
</dbReference>
<dbReference type="Proteomes" id="UP000694725">
    <property type="component" value="Unplaced"/>
</dbReference>
<dbReference type="Proteomes" id="UP000694726">
    <property type="component" value="Unplaced"/>
</dbReference>
<dbReference type="Proteomes" id="UP000694727">
    <property type="component" value="Unplaced"/>
</dbReference>
<dbReference type="Proteomes" id="UP000694728">
    <property type="component" value="Unplaced"/>
</dbReference>
<dbReference type="GO" id="GO:0005737">
    <property type="term" value="C:cytoplasm"/>
    <property type="evidence" value="ECO:0007669"/>
    <property type="project" value="UniProtKB-SubCell"/>
</dbReference>
<dbReference type="GO" id="GO:0103026">
    <property type="term" value="F:fructose-1-phosphatase activity"/>
    <property type="evidence" value="ECO:0007669"/>
    <property type="project" value="RHEA"/>
</dbReference>
<dbReference type="GO" id="GO:0008877">
    <property type="term" value="F:glucose-1-phosphatase activity"/>
    <property type="evidence" value="ECO:0007669"/>
    <property type="project" value="RHEA"/>
</dbReference>
<dbReference type="GO" id="GO:0004346">
    <property type="term" value="F:glucose-6-phosphatase activity"/>
    <property type="evidence" value="ECO:0007669"/>
    <property type="project" value="RHEA"/>
</dbReference>
<dbReference type="GO" id="GO:0047954">
    <property type="term" value="F:glycerol-2-phosphatase activity"/>
    <property type="evidence" value="ECO:0007669"/>
    <property type="project" value="RHEA"/>
</dbReference>
<dbReference type="GO" id="GO:0008934">
    <property type="term" value="F:inositol monophosphate 1-phosphatase activity"/>
    <property type="evidence" value="ECO:0000318"/>
    <property type="project" value="GO_Central"/>
</dbReference>
<dbReference type="GO" id="GO:0052832">
    <property type="term" value="F:inositol monophosphate 3-phosphatase activity"/>
    <property type="evidence" value="ECO:0007669"/>
    <property type="project" value="RHEA"/>
</dbReference>
<dbReference type="GO" id="GO:0052833">
    <property type="term" value="F:inositol monophosphate 4-phosphatase activity"/>
    <property type="evidence" value="ECO:0007669"/>
    <property type="project" value="RHEA"/>
</dbReference>
<dbReference type="GO" id="GO:0052834">
    <property type="term" value="F:inositol monophosphate phosphatase activity"/>
    <property type="evidence" value="ECO:0000250"/>
    <property type="project" value="UniProtKB"/>
</dbReference>
<dbReference type="GO" id="GO:0031403">
    <property type="term" value="F:lithium ion binding"/>
    <property type="evidence" value="ECO:0000250"/>
    <property type="project" value="UniProtKB"/>
</dbReference>
<dbReference type="GO" id="GO:0000287">
    <property type="term" value="F:magnesium ion binding"/>
    <property type="evidence" value="ECO:0000250"/>
    <property type="project" value="UniProtKB"/>
</dbReference>
<dbReference type="GO" id="GO:0030145">
    <property type="term" value="F:manganese ion binding"/>
    <property type="evidence" value="ECO:0000250"/>
    <property type="project" value="UniProtKB"/>
</dbReference>
<dbReference type="GO" id="GO:0006021">
    <property type="term" value="P:inositol biosynthetic process"/>
    <property type="evidence" value="ECO:0007669"/>
    <property type="project" value="UniProtKB-UniPathway"/>
</dbReference>
<dbReference type="GO" id="GO:0006020">
    <property type="term" value="P:inositol metabolic process"/>
    <property type="evidence" value="ECO:0000318"/>
    <property type="project" value="GO_Central"/>
</dbReference>
<dbReference type="GO" id="GO:0046854">
    <property type="term" value="P:phosphatidylinositol phosphate biosynthetic process"/>
    <property type="evidence" value="ECO:0007669"/>
    <property type="project" value="InterPro"/>
</dbReference>
<dbReference type="GO" id="GO:0007165">
    <property type="term" value="P:signal transduction"/>
    <property type="evidence" value="ECO:0000318"/>
    <property type="project" value="GO_Central"/>
</dbReference>
<dbReference type="CDD" id="cd01639">
    <property type="entry name" value="IMPase"/>
    <property type="match status" value="1"/>
</dbReference>
<dbReference type="FunFam" id="3.30.540.10:FF:000004">
    <property type="entry name" value="Inositol-1-monophosphatase"/>
    <property type="match status" value="1"/>
</dbReference>
<dbReference type="FunFam" id="3.40.190.80:FF:000002">
    <property type="entry name" value="Inositol-1-monophosphatase"/>
    <property type="match status" value="1"/>
</dbReference>
<dbReference type="Gene3D" id="3.40.190.80">
    <property type="match status" value="1"/>
</dbReference>
<dbReference type="Gene3D" id="3.30.540.10">
    <property type="entry name" value="Fructose-1,6-Bisphosphatase, subunit A, domain 1"/>
    <property type="match status" value="1"/>
</dbReference>
<dbReference type="InterPro" id="IPR033942">
    <property type="entry name" value="IMPase"/>
</dbReference>
<dbReference type="InterPro" id="IPR020583">
    <property type="entry name" value="Inositol_monoP_metal-BS"/>
</dbReference>
<dbReference type="InterPro" id="IPR020552">
    <property type="entry name" value="Inositol_monoPase_Li-sen"/>
</dbReference>
<dbReference type="InterPro" id="IPR000760">
    <property type="entry name" value="Inositol_monophosphatase-like"/>
</dbReference>
<dbReference type="InterPro" id="IPR020550">
    <property type="entry name" value="Inositol_monophosphatase_CS"/>
</dbReference>
<dbReference type="PANTHER" id="PTHR20854">
    <property type="entry name" value="INOSITOL MONOPHOSPHATASE"/>
    <property type="match status" value="1"/>
</dbReference>
<dbReference type="PANTHER" id="PTHR20854:SF26">
    <property type="entry name" value="INOSITOL MONOPHOSPHATASE 1"/>
    <property type="match status" value="1"/>
</dbReference>
<dbReference type="Pfam" id="PF00459">
    <property type="entry name" value="Inositol_P"/>
    <property type="match status" value="1"/>
</dbReference>
<dbReference type="PRINTS" id="PR00377">
    <property type="entry name" value="IMPHPHTASES"/>
</dbReference>
<dbReference type="PRINTS" id="PR00378">
    <property type="entry name" value="LIIMPHPHTASE"/>
</dbReference>
<dbReference type="SUPFAM" id="SSF56655">
    <property type="entry name" value="Carbohydrate phosphatase"/>
    <property type="match status" value="1"/>
</dbReference>
<dbReference type="PROSITE" id="PS00629">
    <property type="entry name" value="IMP_1"/>
    <property type="match status" value="1"/>
</dbReference>
<dbReference type="PROSITE" id="PS00630">
    <property type="entry name" value="IMP_2"/>
    <property type="match status" value="1"/>
</dbReference>
<sequence>MADPWQECMDYAVTLARQAGEIVREALKNEMNIMIKSSPADLVTATDEKVEKMLISSIKEKYPSHSFIGEESVAAGEKSVLTDNPTWIIDPIDGTTNFVHGFPFVAVSIGFVVNKGMEFGVVYSCMEDKMYTGRKGRGAFCDGQKLQVSPQKDVTNSLLVTELGSSRTPETVRIILSNMERLLCIPIHGIRGVGTAALNMCFVAAGVADAFYEMGIHCWDMAGAGIIVTEAGGVLMDITGGPFDLMSRRVIASSNKALGERIAKEIQIIPLQRDDED</sequence>
<organism>
    <name type="scientific">Sus scrofa</name>
    <name type="common">Pig</name>
    <dbReference type="NCBI Taxonomy" id="9823"/>
    <lineage>
        <taxon>Eukaryota</taxon>
        <taxon>Metazoa</taxon>
        <taxon>Chordata</taxon>
        <taxon>Craniata</taxon>
        <taxon>Vertebrata</taxon>
        <taxon>Euteleostomi</taxon>
        <taxon>Mammalia</taxon>
        <taxon>Eutheria</taxon>
        <taxon>Laurasiatheria</taxon>
        <taxon>Artiodactyla</taxon>
        <taxon>Suina</taxon>
        <taxon>Suidae</taxon>
        <taxon>Sus</taxon>
    </lineage>
</organism>
<accession>O77591</accession>
<keyword id="KW-0963">Cytoplasm</keyword>
<keyword id="KW-0378">Hydrolase</keyword>
<keyword id="KW-0452">Lithium</keyword>
<keyword id="KW-0460">Magnesium</keyword>
<keyword id="KW-0479">Metal-binding</keyword>
<keyword id="KW-0597">Phosphoprotein</keyword>
<keyword id="KW-1185">Reference proteome</keyword>
<name>IMPA1_PIG</name>
<gene>
    <name type="primary">IMPA1</name>
</gene>
<feature type="chain" id="PRO_0000142515" description="Inositol monophosphatase 1">
    <location>
        <begin position="1"/>
        <end position="277"/>
    </location>
</feature>
<feature type="binding site" evidence="1">
    <location>
        <position position="70"/>
    </location>
    <ligand>
        <name>Mg(2+)</name>
        <dbReference type="ChEBI" id="CHEBI:18420"/>
        <label>1</label>
        <note>catalytic</note>
    </ligand>
</feature>
<feature type="binding site" evidence="1">
    <location>
        <position position="70"/>
    </location>
    <ligand>
        <name>substrate</name>
    </ligand>
</feature>
<feature type="binding site" evidence="1">
    <location>
        <position position="90"/>
    </location>
    <ligand>
        <name>Mg(2+)</name>
        <dbReference type="ChEBI" id="CHEBI:18420"/>
        <label>1</label>
        <note>catalytic</note>
    </ligand>
</feature>
<feature type="binding site" evidence="1">
    <location>
        <position position="90"/>
    </location>
    <ligand>
        <name>Mg(2+)</name>
        <dbReference type="ChEBI" id="CHEBI:18420"/>
        <label>2</label>
    </ligand>
</feature>
<feature type="binding site" evidence="1">
    <location>
        <begin position="92"/>
        <end position="95"/>
    </location>
    <ligand>
        <name>substrate</name>
    </ligand>
</feature>
<feature type="binding site" evidence="1">
    <location>
        <position position="92"/>
    </location>
    <ligand>
        <name>Mg(2+)</name>
        <dbReference type="ChEBI" id="CHEBI:18420"/>
        <label>1</label>
        <note>catalytic</note>
    </ligand>
</feature>
<feature type="binding site" evidence="1">
    <location>
        <position position="93"/>
    </location>
    <ligand>
        <name>Mg(2+)</name>
        <dbReference type="ChEBI" id="CHEBI:18420"/>
        <label>2</label>
    </ligand>
</feature>
<feature type="binding site" evidence="1">
    <location>
        <begin position="194"/>
        <end position="196"/>
    </location>
    <ligand>
        <name>substrate</name>
    </ligand>
</feature>
<feature type="binding site" evidence="1">
    <location>
        <position position="213"/>
    </location>
    <ligand>
        <name>substrate</name>
    </ligand>
</feature>
<feature type="binding site" evidence="1">
    <location>
        <position position="220"/>
    </location>
    <ligand>
        <name>Mg(2+)</name>
        <dbReference type="ChEBI" id="CHEBI:18420"/>
        <label>2</label>
    </ligand>
</feature>
<feature type="binding site" evidence="1">
    <location>
        <position position="220"/>
    </location>
    <ligand>
        <name>substrate</name>
    </ligand>
</feature>
<feature type="modified residue" description="Phosphothreonine" evidence="1">
    <location>
        <position position="168"/>
    </location>
</feature>
<evidence type="ECO:0000250" key="1">
    <source>
        <dbReference type="UniProtKB" id="P29218"/>
    </source>
</evidence>
<evidence type="ECO:0000305" key="2"/>
<comment type="function">
    <text evidence="1">Phosphatase involved in the dephosphorylation of myo-inositol monophosphate to generate myo-inositol. Is also able to dephosphorylate scyllo-inositol-phosphate, myo-inositol 1,4-diphosphate, scyllo-inositol-1,3-diphosphate and scyllo-inositol-1,4-diphosphate. Also dephosphorylates in vitro other sugar-phosphates including D-galactose-1-phosphate, glucose-1-phosphate, glucose-6-phosphate, fructose-1-phosphate, beta-glycerophosphate and 2'-AMP. Responsible for the provision of inositol required for synthesis of phosphatidylinositol and polyphosphoinositides, and involved in maintaining normal brain function. Has been implicated as the pharmacological target for lithium Li(+) action in brain.</text>
</comment>
<comment type="catalytic activity">
    <reaction evidence="1">
        <text>a myo-inositol phosphate + H2O = myo-inositol + phosphate</text>
        <dbReference type="Rhea" id="RHEA:24056"/>
        <dbReference type="ChEBI" id="CHEBI:15377"/>
        <dbReference type="ChEBI" id="CHEBI:17268"/>
        <dbReference type="ChEBI" id="CHEBI:43474"/>
        <dbReference type="ChEBI" id="CHEBI:84139"/>
        <dbReference type="EC" id="3.1.3.25"/>
    </reaction>
    <physiologicalReaction direction="left-to-right" evidence="1">
        <dbReference type="Rhea" id="RHEA:24057"/>
    </physiologicalReaction>
</comment>
<comment type="catalytic activity">
    <reaction evidence="1">
        <text>1D-myo-inositol 1-phosphate + H2O = myo-inositol + phosphate</text>
        <dbReference type="Rhea" id="RHEA:27670"/>
        <dbReference type="ChEBI" id="CHEBI:15377"/>
        <dbReference type="ChEBI" id="CHEBI:17268"/>
        <dbReference type="ChEBI" id="CHEBI:43474"/>
        <dbReference type="ChEBI" id="CHEBI:58433"/>
        <dbReference type="EC" id="3.1.3.25"/>
    </reaction>
    <physiologicalReaction direction="left-to-right" evidence="1">
        <dbReference type="Rhea" id="RHEA:27671"/>
    </physiologicalReaction>
</comment>
<comment type="catalytic activity">
    <reaction evidence="1">
        <text>1D-myo-inositol 2-phosphate + H2O = myo-inositol + phosphate</text>
        <dbReference type="Rhea" id="RHEA:44152"/>
        <dbReference type="ChEBI" id="CHEBI:15377"/>
        <dbReference type="ChEBI" id="CHEBI:17268"/>
        <dbReference type="ChEBI" id="CHEBI:43474"/>
        <dbReference type="ChEBI" id="CHEBI:84142"/>
        <dbReference type="EC" id="3.1.3.25"/>
    </reaction>
    <physiologicalReaction direction="left-to-right" evidence="1">
        <dbReference type="Rhea" id="RHEA:44153"/>
    </physiologicalReaction>
</comment>
<comment type="catalytic activity">
    <reaction evidence="1">
        <text>1D-myo-inositol 3-phosphate + H2O = myo-inositol + phosphate</text>
        <dbReference type="Rhea" id="RHEA:30739"/>
        <dbReference type="ChEBI" id="CHEBI:15377"/>
        <dbReference type="ChEBI" id="CHEBI:17268"/>
        <dbReference type="ChEBI" id="CHEBI:43474"/>
        <dbReference type="ChEBI" id="CHEBI:58401"/>
        <dbReference type="EC" id="3.1.3.25"/>
    </reaction>
    <physiologicalReaction direction="left-to-right" evidence="1">
        <dbReference type="Rhea" id="RHEA:30740"/>
    </physiologicalReaction>
</comment>
<comment type="catalytic activity">
    <reaction evidence="1">
        <text>1D-myo-inositol 4-phosphate + H2O = myo-inositol + phosphate</text>
        <dbReference type="Rhea" id="RHEA:30735"/>
        <dbReference type="ChEBI" id="CHEBI:15377"/>
        <dbReference type="ChEBI" id="CHEBI:17268"/>
        <dbReference type="ChEBI" id="CHEBI:43474"/>
        <dbReference type="ChEBI" id="CHEBI:58469"/>
        <dbReference type="EC" id="3.1.3.25"/>
    </reaction>
    <physiologicalReaction direction="left-to-right" evidence="1">
        <dbReference type="Rhea" id="RHEA:30736"/>
    </physiologicalReaction>
</comment>
<comment type="catalytic activity">
    <reaction evidence="1">
        <text>1D-myo-inositol 5-phosphate + H2O = myo-inositol + phosphate</text>
        <dbReference type="Rhea" id="RHEA:44156"/>
        <dbReference type="ChEBI" id="CHEBI:15377"/>
        <dbReference type="ChEBI" id="CHEBI:17268"/>
        <dbReference type="ChEBI" id="CHEBI:43474"/>
        <dbReference type="ChEBI" id="CHEBI:84141"/>
        <dbReference type="EC" id="3.1.3.25"/>
    </reaction>
    <physiologicalReaction direction="left-to-right" evidence="1">
        <dbReference type="Rhea" id="RHEA:44157"/>
    </physiologicalReaction>
</comment>
<comment type="catalytic activity">
    <reaction evidence="1">
        <text>1D-myo-inositol 6-phosphate + H2O = myo-inositol + phosphate</text>
        <dbReference type="Rhea" id="RHEA:44160"/>
        <dbReference type="ChEBI" id="CHEBI:15377"/>
        <dbReference type="ChEBI" id="CHEBI:17268"/>
        <dbReference type="ChEBI" id="CHEBI:43474"/>
        <dbReference type="ChEBI" id="CHEBI:64841"/>
        <dbReference type="EC" id="3.1.3.25"/>
    </reaction>
    <physiologicalReaction direction="left-to-right" evidence="1">
        <dbReference type="Rhea" id="RHEA:44161"/>
    </physiologicalReaction>
</comment>
<comment type="catalytic activity">
    <reaction evidence="1">
        <text>scyllo-inositol 1-phosphate + H2O = scyllo-inositol + phosphate</text>
        <dbReference type="Rhea" id="RHEA:82131"/>
        <dbReference type="ChEBI" id="CHEBI:10642"/>
        <dbReference type="ChEBI" id="CHEBI:15377"/>
        <dbReference type="ChEBI" id="CHEBI:43474"/>
        <dbReference type="ChEBI" id="CHEBI:232087"/>
    </reaction>
    <physiologicalReaction direction="left-to-right" evidence="1">
        <dbReference type="Rhea" id="RHEA:82132"/>
    </physiologicalReaction>
</comment>
<comment type="catalytic activity">
    <reaction evidence="1">
        <text>alpha-D-galactose 1-phosphate + H2O = D-galactose + phosphate</text>
        <dbReference type="Rhea" id="RHEA:29315"/>
        <dbReference type="ChEBI" id="CHEBI:4139"/>
        <dbReference type="ChEBI" id="CHEBI:15377"/>
        <dbReference type="ChEBI" id="CHEBI:43474"/>
        <dbReference type="ChEBI" id="CHEBI:58336"/>
        <dbReference type="EC" id="3.1.3.94"/>
    </reaction>
    <physiologicalReaction direction="left-to-right" evidence="1">
        <dbReference type="Rhea" id="RHEA:29316"/>
    </physiologicalReaction>
</comment>
<comment type="catalytic activity">
    <reaction evidence="1">
        <text>alpha-D-glucose 1-phosphate + H2O = D-glucose + phosphate</text>
        <dbReference type="Rhea" id="RHEA:19933"/>
        <dbReference type="ChEBI" id="CHEBI:4167"/>
        <dbReference type="ChEBI" id="CHEBI:15377"/>
        <dbReference type="ChEBI" id="CHEBI:43474"/>
        <dbReference type="ChEBI" id="CHEBI:58601"/>
    </reaction>
    <physiologicalReaction direction="left-to-right" evidence="1">
        <dbReference type="Rhea" id="RHEA:19934"/>
    </physiologicalReaction>
</comment>
<comment type="catalytic activity">
    <reaction evidence="1">
        <text>D-glucose 6-phosphate + H2O = D-glucose + phosphate</text>
        <dbReference type="Rhea" id="RHEA:16689"/>
        <dbReference type="ChEBI" id="CHEBI:4167"/>
        <dbReference type="ChEBI" id="CHEBI:15377"/>
        <dbReference type="ChEBI" id="CHEBI:43474"/>
        <dbReference type="ChEBI" id="CHEBI:61548"/>
    </reaction>
    <physiologicalReaction direction="left-to-right" evidence="1">
        <dbReference type="Rhea" id="RHEA:16690"/>
    </physiologicalReaction>
</comment>
<comment type="catalytic activity">
    <reaction evidence="1">
        <text>beta-D-fructose 1-phosphate + H2O = D-fructose + phosphate</text>
        <dbReference type="Rhea" id="RHEA:35603"/>
        <dbReference type="ChEBI" id="CHEBI:15377"/>
        <dbReference type="ChEBI" id="CHEBI:37721"/>
        <dbReference type="ChEBI" id="CHEBI:43474"/>
        <dbReference type="ChEBI" id="CHEBI:138881"/>
    </reaction>
    <physiologicalReaction direction="left-to-right" evidence="1">
        <dbReference type="Rhea" id="RHEA:35604"/>
    </physiologicalReaction>
</comment>
<comment type="catalytic activity">
    <reaction evidence="1">
        <text>glycerol 2-phosphate + H2O = glycerol + phosphate</text>
        <dbReference type="Rhea" id="RHEA:13105"/>
        <dbReference type="ChEBI" id="CHEBI:15377"/>
        <dbReference type="ChEBI" id="CHEBI:17754"/>
        <dbReference type="ChEBI" id="CHEBI:43474"/>
        <dbReference type="ChEBI" id="CHEBI:58083"/>
    </reaction>
    <physiologicalReaction direction="left-to-right" evidence="1">
        <dbReference type="Rhea" id="RHEA:13106"/>
    </physiologicalReaction>
</comment>
<comment type="catalytic activity">
    <reaction evidence="1">
        <text>adenosine 2'-phosphate + H2O = adenosine + phosphate</text>
        <dbReference type="Rhea" id="RHEA:37343"/>
        <dbReference type="ChEBI" id="CHEBI:15377"/>
        <dbReference type="ChEBI" id="CHEBI:16335"/>
        <dbReference type="ChEBI" id="CHEBI:43474"/>
        <dbReference type="ChEBI" id="CHEBI:77740"/>
    </reaction>
    <physiologicalReaction direction="left-to-right" evidence="1">
        <dbReference type="Rhea" id="RHEA:37344"/>
    </physiologicalReaction>
</comment>
<comment type="cofactor">
    <cofactor evidence="1">
        <name>Mg(2+)</name>
        <dbReference type="ChEBI" id="CHEBI:18420"/>
    </cofactor>
</comment>
<comment type="activity regulation">
    <text evidence="1">Inhibited by Li(+), Ca(2+) and Mn(2+), but also by Mg(2+) at concentrations above 3 mM.</text>
</comment>
<comment type="pathway">
    <text>Polyol metabolism; myo-inositol biosynthesis; myo-inositol from D-glucose 6-phosphate: step 2/2.</text>
</comment>
<comment type="subunit">
    <text evidence="1">Homodimer.</text>
</comment>
<comment type="subcellular location">
    <subcellularLocation>
        <location evidence="1">Cytoplasm</location>
    </subcellularLocation>
</comment>
<comment type="similarity">
    <text evidence="2">Belongs to the inositol monophosphatase superfamily.</text>
</comment>